<accession>Q4WP38</accession>
<proteinExistence type="inferred from homology"/>
<protein>
    <recommendedName>
        <fullName>Presequence protease, mitochondrial</fullName>
        <shortName>PreP</shortName>
        <ecNumber evidence="2">3.4.24.-</ecNumber>
    </recommendedName>
    <alternativeName>
        <fullName>Pitrilysin metalloproteinase</fullName>
    </alternativeName>
</protein>
<reference key="1">
    <citation type="journal article" date="2005" name="Nature">
        <title>Genomic sequence of the pathogenic and allergenic filamentous fungus Aspergillus fumigatus.</title>
        <authorList>
            <person name="Nierman W.C."/>
            <person name="Pain A."/>
            <person name="Anderson M.J."/>
            <person name="Wortman J.R."/>
            <person name="Kim H.S."/>
            <person name="Arroyo J."/>
            <person name="Berriman M."/>
            <person name="Abe K."/>
            <person name="Archer D.B."/>
            <person name="Bermejo C."/>
            <person name="Bennett J.W."/>
            <person name="Bowyer P."/>
            <person name="Chen D."/>
            <person name="Collins M."/>
            <person name="Coulsen R."/>
            <person name="Davies R."/>
            <person name="Dyer P.S."/>
            <person name="Farman M.L."/>
            <person name="Fedorova N."/>
            <person name="Fedorova N.D."/>
            <person name="Feldblyum T.V."/>
            <person name="Fischer R."/>
            <person name="Fosker N."/>
            <person name="Fraser A."/>
            <person name="Garcia J.L."/>
            <person name="Garcia M.J."/>
            <person name="Goble A."/>
            <person name="Goldman G.H."/>
            <person name="Gomi K."/>
            <person name="Griffith-Jones S."/>
            <person name="Gwilliam R."/>
            <person name="Haas B.J."/>
            <person name="Haas H."/>
            <person name="Harris D.E."/>
            <person name="Horiuchi H."/>
            <person name="Huang J."/>
            <person name="Humphray S."/>
            <person name="Jimenez J."/>
            <person name="Keller N."/>
            <person name="Khouri H."/>
            <person name="Kitamoto K."/>
            <person name="Kobayashi T."/>
            <person name="Konzack S."/>
            <person name="Kulkarni R."/>
            <person name="Kumagai T."/>
            <person name="Lafton A."/>
            <person name="Latge J.-P."/>
            <person name="Li W."/>
            <person name="Lord A."/>
            <person name="Lu C."/>
            <person name="Majoros W.H."/>
            <person name="May G.S."/>
            <person name="Miller B.L."/>
            <person name="Mohamoud Y."/>
            <person name="Molina M."/>
            <person name="Monod M."/>
            <person name="Mouyna I."/>
            <person name="Mulligan S."/>
            <person name="Murphy L.D."/>
            <person name="O'Neil S."/>
            <person name="Paulsen I."/>
            <person name="Penalva M.A."/>
            <person name="Pertea M."/>
            <person name="Price C."/>
            <person name="Pritchard B.L."/>
            <person name="Quail M.A."/>
            <person name="Rabbinowitsch E."/>
            <person name="Rawlins N."/>
            <person name="Rajandream M.A."/>
            <person name="Reichard U."/>
            <person name="Renauld H."/>
            <person name="Robson G.D."/>
            <person name="Rodriguez de Cordoba S."/>
            <person name="Rodriguez-Pena J.M."/>
            <person name="Ronning C.M."/>
            <person name="Rutter S."/>
            <person name="Salzberg S.L."/>
            <person name="Sanchez M."/>
            <person name="Sanchez-Ferrero J.C."/>
            <person name="Saunders D."/>
            <person name="Seeger K."/>
            <person name="Squares R."/>
            <person name="Squares S."/>
            <person name="Takeuchi M."/>
            <person name="Tekaia F."/>
            <person name="Turner G."/>
            <person name="Vazquez de Aldana C.R."/>
            <person name="Weidman J."/>
            <person name="White O."/>
            <person name="Woodward J.R."/>
            <person name="Yu J.-H."/>
            <person name="Fraser C.M."/>
            <person name="Galagan J.E."/>
            <person name="Asai K."/>
            <person name="Machida M."/>
            <person name="Hall N."/>
            <person name="Barrell B.G."/>
            <person name="Denning D.W."/>
        </authorList>
    </citation>
    <scope>NUCLEOTIDE SEQUENCE [LARGE SCALE GENOMIC DNA]</scope>
    <source>
        <strain>ATCC MYA-4609 / CBS 101355 / FGSC A1100 / Af293</strain>
    </source>
</reference>
<evidence type="ECO:0000250" key="1">
    <source>
        <dbReference type="UniProtKB" id="A0A8H8UNX0"/>
    </source>
</evidence>
<evidence type="ECO:0000250" key="2">
    <source>
        <dbReference type="UniProtKB" id="P32898"/>
    </source>
</evidence>
<evidence type="ECO:0000250" key="3">
    <source>
        <dbReference type="UniProtKB" id="Q5JRX3"/>
    </source>
</evidence>
<evidence type="ECO:0000250" key="4">
    <source>
        <dbReference type="UniProtKB" id="Q9LJL3"/>
    </source>
</evidence>
<evidence type="ECO:0000255" key="5"/>
<evidence type="ECO:0000305" key="6"/>
<name>PREP_ASPFU</name>
<keyword id="KW-0378">Hydrolase</keyword>
<keyword id="KW-0479">Metal-binding</keyword>
<keyword id="KW-0482">Metalloprotease</keyword>
<keyword id="KW-0496">Mitochondrion</keyword>
<keyword id="KW-0645">Protease</keyword>
<keyword id="KW-1185">Reference proteome</keyword>
<keyword id="KW-0809">Transit peptide</keyword>
<keyword id="KW-0862">Zinc</keyword>
<feature type="transit peptide" description="Mitochondrion" evidence="5">
    <location>
        <begin position="1"/>
        <end position="42"/>
    </location>
</feature>
<feature type="chain" id="PRO_0000249941" description="Presequence protease, mitochondrial">
    <location>
        <begin position="43"/>
        <end position="1065"/>
    </location>
</feature>
<feature type="active site" description="Proton acceptor" evidence="3">
    <location>
        <position position="120"/>
    </location>
</feature>
<feature type="active site" evidence="4">
    <location>
        <position position="193"/>
    </location>
</feature>
<feature type="binding site" evidence="3">
    <location>
        <position position="117"/>
    </location>
    <ligand>
        <name>Zn(2+)</name>
        <dbReference type="ChEBI" id="CHEBI:29105"/>
        <note>catalytic</note>
    </ligand>
</feature>
<feature type="binding site" evidence="3">
    <location>
        <position position="121"/>
    </location>
    <ligand>
        <name>Zn(2+)</name>
        <dbReference type="ChEBI" id="CHEBI:29105"/>
        <note>catalytic</note>
    </ligand>
</feature>
<feature type="binding site" evidence="3">
    <location>
        <position position="230"/>
    </location>
    <ligand>
        <name>Zn(2+)</name>
        <dbReference type="ChEBI" id="CHEBI:29105"/>
        <note>catalytic</note>
    </ligand>
</feature>
<sequence>MLRSFSGAGKCKCRIPVSRQPVCGRSLRISSTLTPWNQSRRAASTVTSLDSFPNVGEKLHGFTVQEKKHVPELHLTAVRLKHDKTDADYLHVAREDKNNVFGIGFKTNPPDATGVPHILEHTTLCGSEKYPIRDPFFKMLPRSLSNFMNAFTSADHTTYPFATTNRQDFQNLLSVYLDATLHPLLKEEDFRQEGWRLGPEDPRSILTQGEQSKGNLQSEDVVFKGVVYNEMKGQISDANYLYYIKYRESICPSLNNSGGDPQYITDLTHQQLVDFSKRNYHPSNAKILTYGDMPLSVHLKQIGEVLDGFEKGQADTDVKLPLDLSRGPLNVTVPGPIDTFASEDKQYKTSTSWYMGDTTDVVETFSVGILSSLLLDGYGSPMYRALIEGGLGSSFTPNTGLDSSGRVPIFSVGLTGVSEADAPKVKSTIKRVFEESLSSGFNDEKVQGFLHQLELALRHKTANFGIGVMEKTLSSWFNGSNPMKELSWNEVIDEFKKKYEQGGYLESLMQKYLMNDNCLTFTMVGTPSYNKDLDDQEMVRKEKKLSELVERHGSVEQAVSALAEEELQLLKIQEEAQNADLSCLPSLRVEDISREKERKPVRESKMDDIDVVWREAPTNGLTYFQALNSFEELPDDLRLLLPLFNDCIMRLGTGDKTMEQWEDLIKLKTGGITTSTLHTSSPTELGKFREGLQFSGYALDNNIPDMLQILTTLVTETDFTSPHAPAMIQELLRMTTNGALDAVAGSGHRYALNAAAAGLSRSFWVQEQQSGLAQLQATANLLRDAESSPERLAELIDKLRLIQSFAISKGSGLRVRMVCEPSSASQNEIVLQKWLAGLPRNRSPTSPLDHTSVNSVANRVFYDLPYKVYYSGLAMQTVPFIDPSSAPLSVLSQLLTHKYLHPEIREKGGAYGAGASNGPIKGFFAFTSYRDPNPVNSLKVFQNSGIFARDRAWSDRELAEAKLGIFQGLDAPMSVDEEGARYFMSGVTHEMDQRWREQVLDVTAKDVNEVAQKFLVEGSRQSICLLGEKKDWADSDDWEVRKLSMNASGEPVIDPLSQDGAVASA</sequence>
<comment type="function">
    <text evidence="1 2">Degrades mitochondrial transit peptides after their cleavage in the intermembrane space or in the matrix, and presequence peptides; clearance of these peptides is required to keep the presequence processing machinery running (By similarity). Preferentially cleaves the N-terminal side of paired basic amino acid residues (By similarity). Also degrades other unstructured peptides (By similarity). May function as an ATP-dependent peptidase as opposed to a metalloendopeptidase (By similarity).</text>
</comment>
<comment type="cofactor">
    <cofactor evidence="3">
        <name>Zn(2+)</name>
        <dbReference type="ChEBI" id="CHEBI:29105"/>
    </cofactor>
    <text evidence="3">Binds 1 zinc ion per subunit.</text>
</comment>
<comment type="subunit">
    <text evidence="3">Monomer and homodimer; homodimerization is induced by binding of the substrate.</text>
</comment>
<comment type="subcellular location">
    <subcellularLocation>
        <location evidence="2">Mitochondrion intermembrane space</location>
    </subcellularLocation>
    <subcellularLocation>
        <location evidence="2">Mitochondrion matrix</location>
    </subcellularLocation>
</comment>
<comment type="similarity">
    <text evidence="6">Belongs to the peptidase M16 family. PreP subfamily.</text>
</comment>
<organism>
    <name type="scientific">Aspergillus fumigatus (strain ATCC MYA-4609 / CBS 101355 / FGSC A1100 / Af293)</name>
    <name type="common">Neosartorya fumigata</name>
    <dbReference type="NCBI Taxonomy" id="330879"/>
    <lineage>
        <taxon>Eukaryota</taxon>
        <taxon>Fungi</taxon>
        <taxon>Dikarya</taxon>
        <taxon>Ascomycota</taxon>
        <taxon>Pezizomycotina</taxon>
        <taxon>Eurotiomycetes</taxon>
        <taxon>Eurotiomycetidae</taxon>
        <taxon>Eurotiales</taxon>
        <taxon>Aspergillaceae</taxon>
        <taxon>Aspergillus</taxon>
        <taxon>Aspergillus subgen. Fumigati</taxon>
    </lineage>
</organism>
<gene>
    <name type="primary">cym1</name>
    <name type="ORF">AFUA_4G07910</name>
</gene>
<dbReference type="EC" id="3.4.24.-" evidence="2"/>
<dbReference type="EMBL" id="AAHF01000005">
    <property type="protein sequence ID" value="EAL89996.1"/>
    <property type="molecule type" value="Genomic_DNA"/>
</dbReference>
<dbReference type="RefSeq" id="XP_752034.1">
    <property type="nucleotide sequence ID" value="XM_746941.1"/>
</dbReference>
<dbReference type="SMR" id="Q4WP38"/>
<dbReference type="FunCoup" id="Q4WP38">
    <property type="interactions" value="656"/>
</dbReference>
<dbReference type="STRING" id="330879.Q4WP38"/>
<dbReference type="EnsemblFungi" id="EAL89996">
    <property type="protein sequence ID" value="EAL89996"/>
    <property type="gene ID" value="AFUA_4G07910"/>
</dbReference>
<dbReference type="GeneID" id="3508886"/>
<dbReference type="KEGG" id="afm:AFUA_4G07910"/>
<dbReference type="VEuPathDB" id="FungiDB:Afu4g07910"/>
<dbReference type="eggNOG" id="KOG2019">
    <property type="taxonomic scope" value="Eukaryota"/>
</dbReference>
<dbReference type="HOGENOM" id="CLU_009165_0_0_1"/>
<dbReference type="InParanoid" id="Q4WP38"/>
<dbReference type="OMA" id="NYLYYIR"/>
<dbReference type="OrthoDB" id="10250783at2759"/>
<dbReference type="Proteomes" id="UP000002530">
    <property type="component" value="Chromosome 4"/>
</dbReference>
<dbReference type="GO" id="GO:0005758">
    <property type="term" value="C:mitochondrial intermembrane space"/>
    <property type="evidence" value="ECO:0007669"/>
    <property type="project" value="UniProtKB-SubCell"/>
</dbReference>
<dbReference type="GO" id="GO:0005759">
    <property type="term" value="C:mitochondrial matrix"/>
    <property type="evidence" value="ECO:0000318"/>
    <property type="project" value="GO_Central"/>
</dbReference>
<dbReference type="GO" id="GO:0004176">
    <property type="term" value="F:ATP-dependent peptidase activity"/>
    <property type="evidence" value="ECO:0007669"/>
    <property type="project" value="EnsemblFungi"/>
</dbReference>
<dbReference type="GO" id="GO:0004222">
    <property type="term" value="F:metalloendopeptidase activity"/>
    <property type="evidence" value="ECO:0000318"/>
    <property type="project" value="GO_Central"/>
</dbReference>
<dbReference type="GO" id="GO:0008270">
    <property type="term" value="F:zinc ion binding"/>
    <property type="evidence" value="ECO:0000250"/>
    <property type="project" value="UniProtKB"/>
</dbReference>
<dbReference type="GO" id="GO:0034982">
    <property type="term" value="P:mitochondrial protein processing"/>
    <property type="evidence" value="ECO:0007669"/>
    <property type="project" value="EnsemblFungi"/>
</dbReference>
<dbReference type="GO" id="GO:0016485">
    <property type="term" value="P:protein processing"/>
    <property type="evidence" value="ECO:0000250"/>
    <property type="project" value="UniProtKB"/>
</dbReference>
<dbReference type="GO" id="GO:0051603">
    <property type="term" value="P:proteolysis involved in protein catabolic process"/>
    <property type="evidence" value="ECO:0007669"/>
    <property type="project" value="EnsemblFungi"/>
</dbReference>
<dbReference type="FunFam" id="3.30.830.10:FF:000020">
    <property type="entry name" value="Mitochondrial presequence protease"/>
    <property type="match status" value="1"/>
</dbReference>
<dbReference type="FunFam" id="3.30.830.10:FF:000009">
    <property type="entry name" value="Presequence protease, mitochondrial"/>
    <property type="match status" value="1"/>
</dbReference>
<dbReference type="FunFam" id="3.30.830.10:FF:000011">
    <property type="entry name" value="Presequence protease, mitochondrial"/>
    <property type="match status" value="1"/>
</dbReference>
<dbReference type="Gene3D" id="3.30.830.10">
    <property type="entry name" value="Metalloenzyme, LuxS/M16 peptidase-like"/>
    <property type="match status" value="4"/>
</dbReference>
<dbReference type="InterPro" id="IPR011249">
    <property type="entry name" value="Metalloenz_LuxS/M16"/>
</dbReference>
<dbReference type="InterPro" id="IPR011765">
    <property type="entry name" value="Pept_M16_N"/>
</dbReference>
<dbReference type="InterPro" id="IPR007863">
    <property type="entry name" value="Peptidase_M16_C"/>
</dbReference>
<dbReference type="InterPro" id="IPR013578">
    <property type="entry name" value="Peptidase_M16C_assoc"/>
</dbReference>
<dbReference type="InterPro" id="IPR055130">
    <property type="entry name" value="PreP_C"/>
</dbReference>
<dbReference type="PANTHER" id="PTHR43016">
    <property type="entry name" value="PRESEQUENCE PROTEASE"/>
    <property type="match status" value="1"/>
</dbReference>
<dbReference type="PANTHER" id="PTHR43016:SF13">
    <property type="entry name" value="PRESEQUENCE PROTEASE, MITOCHONDRIAL"/>
    <property type="match status" value="1"/>
</dbReference>
<dbReference type="Pfam" id="PF08367">
    <property type="entry name" value="M16C_assoc"/>
    <property type="match status" value="1"/>
</dbReference>
<dbReference type="Pfam" id="PF00675">
    <property type="entry name" value="Peptidase_M16"/>
    <property type="match status" value="1"/>
</dbReference>
<dbReference type="Pfam" id="PF05193">
    <property type="entry name" value="Peptidase_M16_C"/>
    <property type="match status" value="1"/>
</dbReference>
<dbReference type="Pfam" id="PF22516">
    <property type="entry name" value="PreP_C"/>
    <property type="match status" value="1"/>
</dbReference>
<dbReference type="SMART" id="SM01264">
    <property type="entry name" value="M16C_associated"/>
    <property type="match status" value="1"/>
</dbReference>
<dbReference type="SUPFAM" id="SSF63411">
    <property type="entry name" value="LuxS/MPP-like metallohydrolase"/>
    <property type="match status" value="4"/>
</dbReference>